<accession>Q1G8Z0</accession>
<feature type="chain" id="PRO_0000332838" description="Cysteine--tRNA ligase">
    <location>
        <begin position="1"/>
        <end position="474"/>
    </location>
</feature>
<feature type="short sequence motif" description="'HIGH' region">
    <location>
        <begin position="29"/>
        <end position="39"/>
    </location>
</feature>
<feature type="short sequence motif" description="'KMSKS' region">
    <location>
        <begin position="271"/>
        <end position="275"/>
    </location>
</feature>
<feature type="binding site" evidence="1">
    <location>
        <position position="27"/>
    </location>
    <ligand>
        <name>Zn(2+)</name>
        <dbReference type="ChEBI" id="CHEBI:29105"/>
    </ligand>
</feature>
<feature type="binding site" evidence="1">
    <location>
        <position position="212"/>
    </location>
    <ligand>
        <name>Zn(2+)</name>
        <dbReference type="ChEBI" id="CHEBI:29105"/>
    </ligand>
</feature>
<feature type="binding site" evidence="1">
    <location>
        <position position="237"/>
    </location>
    <ligand>
        <name>Zn(2+)</name>
        <dbReference type="ChEBI" id="CHEBI:29105"/>
    </ligand>
</feature>
<feature type="binding site" evidence="1">
    <location>
        <position position="241"/>
    </location>
    <ligand>
        <name>Zn(2+)</name>
        <dbReference type="ChEBI" id="CHEBI:29105"/>
    </ligand>
</feature>
<feature type="binding site" evidence="1">
    <location>
        <position position="274"/>
    </location>
    <ligand>
        <name>ATP</name>
        <dbReference type="ChEBI" id="CHEBI:30616"/>
    </ligand>
</feature>
<gene>
    <name evidence="1" type="primary">cysS</name>
    <name type="ordered locus">Ldb1680</name>
</gene>
<comment type="catalytic activity">
    <reaction evidence="1">
        <text>tRNA(Cys) + L-cysteine + ATP = L-cysteinyl-tRNA(Cys) + AMP + diphosphate</text>
        <dbReference type="Rhea" id="RHEA:17773"/>
        <dbReference type="Rhea" id="RHEA-COMP:9661"/>
        <dbReference type="Rhea" id="RHEA-COMP:9679"/>
        <dbReference type="ChEBI" id="CHEBI:30616"/>
        <dbReference type="ChEBI" id="CHEBI:33019"/>
        <dbReference type="ChEBI" id="CHEBI:35235"/>
        <dbReference type="ChEBI" id="CHEBI:78442"/>
        <dbReference type="ChEBI" id="CHEBI:78517"/>
        <dbReference type="ChEBI" id="CHEBI:456215"/>
        <dbReference type="EC" id="6.1.1.16"/>
    </reaction>
</comment>
<comment type="cofactor">
    <cofactor evidence="1">
        <name>Zn(2+)</name>
        <dbReference type="ChEBI" id="CHEBI:29105"/>
    </cofactor>
    <text evidence="1">Binds 1 zinc ion per subunit.</text>
</comment>
<comment type="subunit">
    <text evidence="1">Monomer.</text>
</comment>
<comment type="subcellular location">
    <subcellularLocation>
        <location evidence="1">Cytoplasm</location>
    </subcellularLocation>
</comment>
<comment type="similarity">
    <text evidence="1">Belongs to the class-I aminoacyl-tRNA synthetase family.</text>
</comment>
<evidence type="ECO:0000255" key="1">
    <source>
        <dbReference type="HAMAP-Rule" id="MF_00041"/>
    </source>
</evidence>
<name>SYC_LACDA</name>
<protein>
    <recommendedName>
        <fullName evidence="1">Cysteine--tRNA ligase</fullName>
        <ecNumber evidence="1">6.1.1.16</ecNumber>
    </recommendedName>
    <alternativeName>
        <fullName evidence="1">Cysteinyl-tRNA synthetase</fullName>
        <shortName evidence="1">CysRS</shortName>
    </alternativeName>
</protein>
<dbReference type="EC" id="6.1.1.16" evidence="1"/>
<dbReference type="EMBL" id="CR954253">
    <property type="protein sequence ID" value="CAI98469.1"/>
    <property type="molecule type" value="Genomic_DNA"/>
</dbReference>
<dbReference type="RefSeq" id="WP_011544141.1">
    <property type="nucleotide sequence ID" value="NC_008054.1"/>
</dbReference>
<dbReference type="SMR" id="Q1G8Z0"/>
<dbReference type="STRING" id="390333.Ldb1680"/>
<dbReference type="KEGG" id="ldb:Ldb1680"/>
<dbReference type="PATRIC" id="fig|390333.13.peg.945"/>
<dbReference type="eggNOG" id="COG0215">
    <property type="taxonomic scope" value="Bacteria"/>
</dbReference>
<dbReference type="HOGENOM" id="CLU_013528_0_1_9"/>
<dbReference type="BioCyc" id="LDEL390333:LDB_RS07260-MONOMER"/>
<dbReference type="Proteomes" id="UP000001259">
    <property type="component" value="Chromosome"/>
</dbReference>
<dbReference type="GO" id="GO:0005829">
    <property type="term" value="C:cytosol"/>
    <property type="evidence" value="ECO:0007669"/>
    <property type="project" value="TreeGrafter"/>
</dbReference>
<dbReference type="GO" id="GO:0005524">
    <property type="term" value="F:ATP binding"/>
    <property type="evidence" value="ECO:0007669"/>
    <property type="project" value="UniProtKB-UniRule"/>
</dbReference>
<dbReference type="GO" id="GO:0004817">
    <property type="term" value="F:cysteine-tRNA ligase activity"/>
    <property type="evidence" value="ECO:0007669"/>
    <property type="project" value="UniProtKB-UniRule"/>
</dbReference>
<dbReference type="GO" id="GO:0008270">
    <property type="term" value="F:zinc ion binding"/>
    <property type="evidence" value="ECO:0007669"/>
    <property type="project" value="UniProtKB-UniRule"/>
</dbReference>
<dbReference type="GO" id="GO:0006423">
    <property type="term" value="P:cysteinyl-tRNA aminoacylation"/>
    <property type="evidence" value="ECO:0007669"/>
    <property type="project" value="UniProtKB-UniRule"/>
</dbReference>
<dbReference type="CDD" id="cd00672">
    <property type="entry name" value="CysRS_core"/>
    <property type="match status" value="1"/>
</dbReference>
<dbReference type="FunFam" id="3.40.50.620:FF:000009">
    <property type="entry name" value="Cysteine--tRNA ligase"/>
    <property type="match status" value="1"/>
</dbReference>
<dbReference type="Gene3D" id="1.20.120.1910">
    <property type="entry name" value="Cysteine-tRNA ligase, C-terminal anti-codon recognition domain"/>
    <property type="match status" value="1"/>
</dbReference>
<dbReference type="Gene3D" id="3.40.50.620">
    <property type="entry name" value="HUPs"/>
    <property type="match status" value="1"/>
</dbReference>
<dbReference type="HAMAP" id="MF_00041">
    <property type="entry name" value="Cys_tRNA_synth"/>
    <property type="match status" value="1"/>
</dbReference>
<dbReference type="InterPro" id="IPR015803">
    <property type="entry name" value="Cys-tRNA-ligase"/>
</dbReference>
<dbReference type="InterPro" id="IPR015273">
    <property type="entry name" value="Cys-tRNA-synt_Ia_DALR"/>
</dbReference>
<dbReference type="InterPro" id="IPR024909">
    <property type="entry name" value="Cys-tRNA/MSH_ligase"/>
</dbReference>
<dbReference type="InterPro" id="IPR056411">
    <property type="entry name" value="CysS_C"/>
</dbReference>
<dbReference type="InterPro" id="IPR014729">
    <property type="entry name" value="Rossmann-like_a/b/a_fold"/>
</dbReference>
<dbReference type="InterPro" id="IPR032678">
    <property type="entry name" value="tRNA-synt_1_cat_dom"/>
</dbReference>
<dbReference type="InterPro" id="IPR009080">
    <property type="entry name" value="tRNAsynth_Ia_anticodon-bd"/>
</dbReference>
<dbReference type="NCBIfam" id="TIGR00435">
    <property type="entry name" value="cysS"/>
    <property type="match status" value="1"/>
</dbReference>
<dbReference type="PANTHER" id="PTHR10890:SF3">
    <property type="entry name" value="CYSTEINE--TRNA LIGASE, CYTOPLASMIC"/>
    <property type="match status" value="1"/>
</dbReference>
<dbReference type="PANTHER" id="PTHR10890">
    <property type="entry name" value="CYSTEINYL-TRNA SYNTHETASE"/>
    <property type="match status" value="1"/>
</dbReference>
<dbReference type="Pfam" id="PF23493">
    <property type="entry name" value="CysS_C"/>
    <property type="match status" value="1"/>
</dbReference>
<dbReference type="Pfam" id="PF09190">
    <property type="entry name" value="DALR_2"/>
    <property type="match status" value="1"/>
</dbReference>
<dbReference type="Pfam" id="PF01406">
    <property type="entry name" value="tRNA-synt_1e"/>
    <property type="match status" value="1"/>
</dbReference>
<dbReference type="PRINTS" id="PR00983">
    <property type="entry name" value="TRNASYNTHCYS"/>
</dbReference>
<dbReference type="SMART" id="SM00840">
    <property type="entry name" value="DALR_2"/>
    <property type="match status" value="1"/>
</dbReference>
<dbReference type="SUPFAM" id="SSF47323">
    <property type="entry name" value="Anticodon-binding domain of a subclass of class I aminoacyl-tRNA synthetases"/>
    <property type="match status" value="1"/>
</dbReference>
<dbReference type="SUPFAM" id="SSF52374">
    <property type="entry name" value="Nucleotidylyl transferase"/>
    <property type="match status" value="1"/>
</dbReference>
<organism>
    <name type="scientific">Lactobacillus delbrueckii subsp. bulgaricus (strain ATCC 11842 / DSM 20081 / BCRC 10696 / JCM 1002 / NBRC 13953 / NCIMB 11778 / NCTC 12712 / WDCM 00102 / Lb 14)</name>
    <dbReference type="NCBI Taxonomy" id="390333"/>
    <lineage>
        <taxon>Bacteria</taxon>
        <taxon>Bacillati</taxon>
        <taxon>Bacillota</taxon>
        <taxon>Bacilli</taxon>
        <taxon>Lactobacillales</taxon>
        <taxon>Lactobacillaceae</taxon>
        <taxon>Lactobacillus</taxon>
    </lineage>
</organism>
<keyword id="KW-0030">Aminoacyl-tRNA synthetase</keyword>
<keyword id="KW-0067">ATP-binding</keyword>
<keyword id="KW-0963">Cytoplasm</keyword>
<keyword id="KW-0436">Ligase</keyword>
<keyword id="KW-0479">Metal-binding</keyword>
<keyword id="KW-0547">Nucleotide-binding</keyword>
<keyword id="KW-0648">Protein biosynthesis</keyword>
<keyword id="KW-1185">Reference proteome</keyword>
<keyword id="KW-0862">Zinc</keyword>
<sequence>MKLFNTLTRQKEEFKPLVPGQVSMYVCGPTVYNYIHIGNARSAIAFDTIRRYFEYKGYKVNYVSNFTDVDDKMINEAGAEGTTVPELAERYIQAFLEDTRALNIEEATLHPRATHEIPAIIDFIQTLIDKGYAYEADGDVYYRTKKFADYGHLSDQNIDQLEEGASQHVNDEEQGRKEDPIDFALWKGQKAADEIAWDSPWGKGRPGWHIECSVMSTKYLGDTLDIHGGGQDLEFPHHENEIAQSEAKTGKKFVNYWLHNGFVTVGKDEEKMSKSLHNCVTVHDILKNVDPQVLRFFMASVQYRSQINYSEENLEQAANILGRFKNTLEGINYRLADATEGLPDPDLAKLVTETTAKFEAAMDDDFNVQNALTAIYEALPAVNSNANAEKADKESLRLFAKKLAAWLSVFGLDVDKLLAKEAGDDDAVIEELVAQRTEARKNKDWAKSDELRDQLKEMGVVLKDTPQGTRWSRE</sequence>
<proteinExistence type="inferred from homology"/>
<reference key="1">
    <citation type="journal article" date="2006" name="Proc. Natl. Acad. Sci. U.S.A.">
        <title>The complete genome sequence of Lactobacillus bulgaricus reveals extensive and ongoing reductive evolution.</title>
        <authorList>
            <person name="van de Guchte M."/>
            <person name="Penaud S."/>
            <person name="Grimaldi C."/>
            <person name="Barbe V."/>
            <person name="Bryson K."/>
            <person name="Nicolas P."/>
            <person name="Robert C."/>
            <person name="Oztas S."/>
            <person name="Mangenot S."/>
            <person name="Couloux A."/>
            <person name="Loux V."/>
            <person name="Dervyn R."/>
            <person name="Bossy R."/>
            <person name="Bolotin A."/>
            <person name="Batto J.-M."/>
            <person name="Walunas T."/>
            <person name="Gibrat J.-F."/>
            <person name="Bessieres P."/>
            <person name="Weissenbach J."/>
            <person name="Ehrlich S.D."/>
            <person name="Maguin E."/>
        </authorList>
    </citation>
    <scope>NUCLEOTIDE SEQUENCE [LARGE SCALE GENOMIC DNA]</scope>
    <source>
        <strain>ATCC 11842 / DSM 20081 / BCRC 10696 / JCM 1002 / NBRC 13953 / NCIMB 11778 / NCTC 12712 / WDCM 00102 / Lb 14</strain>
    </source>
</reference>